<dbReference type="EMBL" id="AE002098">
    <property type="protein sequence ID" value="AAF40626.1"/>
    <property type="molecule type" value="Genomic_DNA"/>
</dbReference>
<dbReference type="PIR" id="A81230">
    <property type="entry name" value="A81230"/>
</dbReference>
<dbReference type="RefSeq" id="NP_273227.1">
    <property type="nucleotide sequence ID" value="NC_003112.2"/>
</dbReference>
<dbReference type="RefSeq" id="WP_002224774.1">
    <property type="nucleotide sequence ID" value="NC_003112.2"/>
</dbReference>
<dbReference type="SMR" id="Q9K1I1"/>
<dbReference type="FunCoup" id="Q9K1I1">
    <property type="interactions" value="601"/>
</dbReference>
<dbReference type="STRING" id="122586.NMB0169"/>
<dbReference type="PaxDb" id="122586-NMB0169"/>
<dbReference type="KEGG" id="nme:NMB0169"/>
<dbReference type="PATRIC" id="fig|122586.8.peg.210"/>
<dbReference type="HOGENOM" id="CLU_074407_2_0_4"/>
<dbReference type="InParanoid" id="Q9K1I1"/>
<dbReference type="OrthoDB" id="9809073at2"/>
<dbReference type="Proteomes" id="UP000000425">
    <property type="component" value="Chromosome"/>
</dbReference>
<dbReference type="GO" id="GO:0022625">
    <property type="term" value="C:cytosolic large ribosomal subunit"/>
    <property type="evidence" value="ECO:0000318"/>
    <property type="project" value="GO_Central"/>
</dbReference>
<dbReference type="GO" id="GO:0003735">
    <property type="term" value="F:structural constituent of ribosome"/>
    <property type="evidence" value="ECO:0000318"/>
    <property type="project" value="GO_Central"/>
</dbReference>
<dbReference type="GO" id="GO:0006412">
    <property type="term" value="P:translation"/>
    <property type="evidence" value="ECO:0007669"/>
    <property type="project" value="UniProtKB-UniRule"/>
</dbReference>
<dbReference type="FunFam" id="3.90.1030.10:FF:000001">
    <property type="entry name" value="50S ribosomal protein L17"/>
    <property type="match status" value="1"/>
</dbReference>
<dbReference type="Gene3D" id="3.90.1030.10">
    <property type="entry name" value="Ribosomal protein L17"/>
    <property type="match status" value="1"/>
</dbReference>
<dbReference type="HAMAP" id="MF_01368">
    <property type="entry name" value="Ribosomal_bL17"/>
    <property type="match status" value="1"/>
</dbReference>
<dbReference type="InterPro" id="IPR000456">
    <property type="entry name" value="Ribosomal_bL17"/>
</dbReference>
<dbReference type="InterPro" id="IPR047859">
    <property type="entry name" value="Ribosomal_bL17_CS"/>
</dbReference>
<dbReference type="InterPro" id="IPR036373">
    <property type="entry name" value="Ribosomal_bL17_sf"/>
</dbReference>
<dbReference type="NCBIfam" id="TIGR00059">
    <property type="entry name" value="L17"/>
    <property type="match status" value="1"/>
</dbReference>
<dbReference type="PANTHER" id="PTHR14413:SF16">
    <property type="entry name" value="LARGE RIBOSOMAL SUBUNIT PROTEIN BL17M"/>
    <property type="match status" value="1"/>
</dbReference>
<dbReference type="PANTHER" id="PTHR14413">
    <property type="entry name" value="RIBOSOMAL PROTEIN L17"/>
    <property type="match status" value="1"/>
</dbReference>
<dbReference type="Pfam" id="PF01196">
    <property type="entry name" value="Ribosomal_L17"/>
    <property type="match status" value="1"/>
</dbReference>
<dbReference type="SUPFAM" id="SSF64263">
    <property type="entry name" value="Prokaryotic ribosomal protein L17"/>
    <property type="match status" value="1"/>
</dbReference>
<dbReference type="PROSITE" id="PS01167">
    <property type="entry name" value="RIBOSOMAL_L17"/>
    <property type="match status" value="1"/>
</dbReference>
<comment type="subunit">
    <text evidence="1">Part of the 50S ribosomal subunit. Contacts protein L32.</text>
</comment>
<comment type="similarity">
    <text evidence="1">Belongs to the bacterial ribosomal protein bL17 family.</text>
</comment>
<reference key="1">
    <citation type="journal article" date="2000" name="Science">
        <title>Complete genome sequence of Neisseria meningitidis serogroup B strain MC58.</title>
        <authorList>
            <person name="Tettelin H."/>
            <person name="Saunders N.J."/>
            <person name="Heidelberg J.F."/>
            <person name="Jeffries A.C."/>
            <person name="Nelson K.E."/>
            <person name="Eisen J.A."/>
            <person name="Ketchum K.A."/>
            <person name="Hood D.W."/>
            <person name="Peden J.F."/>
            <person name="Dodson R.J."/>
            <person name="Nelson W.C."/>
            <person name="Gwinn M.L."/>
            <person name="DeBoy R.T."/>
            <person name="Peterson J.D."/>
            <person name="Hickey E.K."/>
            <person name="Haft D.H."/>
            <person name="Salzberg S.L."/>
            <person name="White O."/>
            <person name="Fleischmann R.D."/>
            <person name="Dougherty B.A."/>
            <person name="Mason T.M."/>
            <person name="Ciecko A."/>
            <person name="Parksey D.S."/>
            <person name="Blair E."/>
            <person name="Cittone H."/>
            <person name="Clark E.B."/>
            <person name="Cotton M.D."/>
            <person name="Utterback T.R."/>
            <person name="Khouri H.M."/>
            <person name="Qin H."/>
            <person name="Vamathevan J.J."/>
            <person name="Gill J."/>
            <person name="Scarlato V."/>
            <person name="Masignani V."/>
            <person name="Pizza M."/>
            <person name="Grandi G."/>
            <person name="Sun L."/>
            <person name="Smith H.O."/>
            <person name="Fraser C.M."/>
            <person name="Moxon E.R."/>
            <person name="Rappuoli R."/>
            <person name="Venter J.C."/>
        </authorList>
    </citation>
    <scope>NUCLEOTIDE SEQUENCE [LARGE SCALE GENOMIC DNA]</scope>
    <source>
        <strain>ATCC BAA-335 / MC58</strain>
    </source>
</reference>
<protein>
    <recommendedName>
        <fullName evidence="1">Large ribosomal subunit protein bL17</fullName>
    </recommendedName>
    <alternativeName>
        <fullName evidence="2">50S ribosomal protein L17</fullName>
    </alternativeName>
</protein>
<sequence>MRHRNGNRKLNRTSSHRAAMLRNMANSLLTHEAIVTTLPKAKELRRVVEPLITLGKKPSLANRRLAFDRTRDRDVVVKLFGDLGPRFTARNGGYVRVLKYGFRKGDNAPLALVELVDKPAAE</sequence>
<name>RL17_NEIMB</name>
<keyword id="KW-1185">Reference proteome</keyword>
<keyword id="KW-0687">Ribonucleoprotein</keyword>
<keyword id="KW-0689">Ribosomal protein</keyword>
<proteinExistence type="inferred from homology"/>
<evidence type="ECO:0000255" key="1">
    <source>
        <dbReference type="HAMAP-Rule" id="MF_01368"/>
    </source>
</evidence>
<evidence type="ECO:0000305" key="2"/>
<organism>
    <name type="scientific">Neisseria meningitidis serogroup B (strain ATCC BAA-335 / MC58)</name>
    <dbReference type="NCBI Taxonomy" id="122586"/>
    <lineage>
        <taxon>Bacteria</taxon>
        <taxon>Pseudomonadati</taxon>
        <taxon>Pseudomonadota</taxon>
        <taxon>Betaproteobacteria</taxon>
        <taxon>Neisseriales</taxon>
        <taxon>Neisseriaceae</taxon>
        <taxon>Neisseria</taxon>
    </lineage>
</organism>
<feature type="chain" id="PRO_0000267899" description="Large ribosomal subunit protein bL17">
    <location>
        <begin position="1"/>
        <end position="122"/>
    </location>
</feature>
<accession>Q9K1I1</accession>
<gene>
    <name evidence="1" type="primary">rplQ</name>
    <name type="ordered locus">NMB0169</name>
</gene>